<proteinExistence type="inferred from homology"/>
<evidence type="ECO:0000255" key="1">
    <source>
        <dbReference type="HAMAP-Rule" id="MF_01595"/>
    </source>
</evidence>
<evidence type="ECO:0000256" key="2">
    <source>
        <dbReference type="SAM" id="MobiDB-lite"/>
    </source>
</evidence>
<accession>A8G5Y9</accession>
<sequence>MEGQNKSITFDGREIRLTTGLYAPQASGSVMIECGDTSLLVTATKTTKKEASDFLPLICDYEEKLYAAGRIPGGFMRREGRPPERATLISRLIDRPMRPLFPTWMRDEIQIVASCLSLDERVPADVLAVTGASIATLLGEIPFYGPMAAVRVGLIGDDFILNPSYREIEKGDLDIVVAGSPDGIVMIEAGANQLSEQDTIEAIDFGYEAVTELIKSQEDLLKDLGIKQIKPSDPEEDKTLPSYLEKNCSKAIDLVLKKFDQSKEERDLELEKIKTETQSKIDSLKDDNEVRVLTSENEKLIHSDFKKLTKKLMRSQIINDGKRVDGRELDEVRKITASAGILPKRVHGSALFQRGLTQVLSTTTLGTPSDAQEMDDLNPSTEKTYLHHYNFPPYSVGETRPMRTPGRREIGHGALAERAIIPVLPGKETFPYVLRVVSEVLSSNGSTSMGSVCGSTLSLLDAGVPLKAPVGGTAMGLIKEGKDVRILTDIQGIEDFLGDMDFKVAGTNKGITALQMDMKITGLPVSIISDAIKKARPARLHILEKMQEAIDKPQESLSPHAPRLLSFRIDPELIGTVIGPGGRTIKGITERTNTKIDIEDGGIVTIASHDGAAAEEAQKIIEGLTRKVHEGEIFSGVVTRIIPIGAFVEILPGKEGMVHISQLSEARVERVEDVVRQGDEVTVRVREIDSRGRINLTLRGVGQNNGMSYPEPTPTPVAPLN</sequence>
<protein>
    <recommendedName>
        <fullName evidence="1">Polyribonucleotide nucleotidyltransferase</fullName>
        <ecNumber evidence="1">2.7.7.8</ecNumber>
    </recommendedName>
    <alternativeName>
        <fullName evidence="1">Polynucleotide phosphorylase</fullName>
        <shortName evidence="1">PNPase</shortName>
    </alternativeName>
</protein>
<comment type="function">
    <text evidence="1">Involved in mRNA degradation. Catalyzes the phosphorolysis of single-stranded polyribonucleotides processively in the 3'- to 5'-direction.</text>
</comment>
<comment type="catalytic activity">
    <reaction evidence="1">
        <text>RNA(n+1) + phosphate = RNA(n) + a ribonucleoside 5'-diphosphate</text>
        <dbReference type="Rhea" id="RHEA:22096"/>
        <dbReference type="Rhea" id="RHEA-COMP:14527"/>
        <dbReference type="Rhea" id="RHEA-COMP:17342"/>
        <dbReference type="ChEBI" id="CHEBI:43474"/>
        <dbReference type="ChEBI" id="CHEBI:57930"/>
        <dbReference type="ChEBI" id="CHEBI:140395"/>
        <dbReference type="EC" id="2.7.7.8"/>
    </reaction>
</comment>
<comment type="cofactor">
    <cofactor evidence="1">
        <name>Mg(2+)</name>
        <dbReference type="ChEBI" id="CHEBI:18420"/>
    </cofactor>
</comment>
<comment type="subcellular location">
    <subcellularLocation>
        <location evidence="1">Cytoplasm</location>
    </subcellularLocation>
</comment>
<comment type="similarity">
    <text evidence="1">Belongs to the polyribonucleotide nucleotidyltransferase family.</text>
</comment>
<reference key="1">
    <citation type="journal article" date="2007" name="PLoS Genet.">
        <title>Patterns and implications of gene gain and loss in the evolution of Prochlorococcus.</title>
        <authorList>
            <person name="Kettler G.C."/>
            <person name="Martiny A.C."/>
            <person name="Huang K."/>
            <person name="Zucker J."/>
            <person name="Coleman M.L."/>
            <person name="Rodrigue S."/>
            <person name="Chen F."/>
            <person name="Lapidus A."/>
            <person name="Ferriera S."/>
            <person name="Johnson J."/>
            <person name="Steglich C."/>
            <person name="Church G.M."/>
            <person name="Richardson P."/>
            <person name="Chisholm S.W."/>
        </authorList>
    </citation>
    <scope>NUCLEOTIDE SEQUENCE [LARGE SCALE GENOMIC DNA]</scope>
    <source>
        <strain>MIT 9215</strain>
    </source>
</reference>
<feature type="chain" id="PRO_0000329765" description="Polyribonucleotide nucleotidyltransferase">
    <location>
        <begin position="1"/>
        <end position="721"/>
    </location>
</feature>
<feature type="domain" description="KH" evidence="1">
    <location>
        <begin position="562"/>
        <end position="621"/>
    </location>
</feature>
<feature type="domain" description="S1 motif" evidence="1">
    <location>
        <begin position="631"/>
        <end position="699"/>
    </location>
</feature>
<feature type="region of interest" description="Disordered" evidence="2">
    <location>
        <begin position="701"/>
        <end position="721"/>
    </location>
</feature>
<feature type="compositionally biased region" description="Pro residues" evidence="2">
    <location>
        <begin position="711"/>
        <end position="721"/>
    </location>
</feature>
<feature type="binding site" evidence="1">
    <location>
        <position position="495"/>
    </location>
    <ligand>
        <name>Mg(2+)</name>
        <dbReference type="ChEBI" id="CHEBI:18420"/>
    </ligand>
</feature>
<feature type="binding site" evidence="1">
    <location>
        <position position="501"/>
    </location>
    <ligand>
        <name>Mg(2+)</name>
        <dbReference type="ChEBI" id="CHEBI:18420"/>
    </ligand>
</feature>
<name>PNP_PROM2</name>
<organism>
    <name type="scientific">Prochlorococcus marinus (strain MIT 9215)</name>
    <dbReference type="NCBI Taxonomy" id="93060"/>
    <lineage>
        <taxon>Bacteria</taxon>
        <taxon>Bacillati</taxon>
        <taxon>Cyanobacteriota</taxon>
        <taxon>Cyanophyceae</taxon>
        <taxon>Synechococcales</taxon>
        <taxon>Prochlorococcaceae</taxon>
        <taxon>Prochlorococcus</taxon>
    </lineage>
</organism>
<dbReference type="EC" id="2.7.7.8" evidence="1"/>
<dbReference type="EMBL" id="CP000825">
    <property type="protein sequence ID" value="ABV51020.1"/>
    <property type="molecule type" value="Genomic_DNA"/>
</dbReference>
<dbReference type="RefSeq" id="WP_012008068.1">
    <property type="nucleotide sequence ID" value="NC_009840.1"/>
</dbReference>
<dbReference type="SMR" id="A8G5Y9"/>
<dbReference type="STRING" id="93060.P9215_14051"/>
<dbReference type="KEGG" id="pmh:P9215_14051"/>
<dbReference type="eggNOG" id="COG1185">
    <property type="taxonomic scope" value="Bacteria"/>
</dbReference>
<dbReference type="HOGENOM" id="CLU_004217_2_2_3"/>
<dbReference type="OrthoDB" id="9804305at2"/>
<dbReference type="Proteomes" id="UP000002014">
    <property type="component" value="Chromosome"/>
</dbReference>
<dbReference type="GO" id="GO:0005829">
    <property type="term" value="C:cytosol"/>
    <property type="evidence" value="ECO:0007669"/>
    <property type="project" value="TreeGrafter"/>
</dbReference>
<dbReference type="GO" id="GO:0000175">
    <property type="term" value="F:3'-5'-RNA exonuclease activity"/>
    <property type="evidence" value="ECO:0007669"/>
    <property type="project" value="TreeGrafter"/>
</dbReference>
<dbReference type="GO" id="GO:0000287">
    <property type="term" value="F:magnesium ion binding"/>
    <property type="evidence" value="ECO:0007669"/>
    <property type="project" value="UniProtKB-UniRule"/>
</dbReference>
<dbReference type="GO" id="GO:0004654">
    <property type="term" value="F:polyribonucleotide nucleotidyltransferase activity"/>
    <property type="evidence" value="ECO:0007669"/>
    <property type="project" value="UniProtKB-UniRule"/>
</dbReference>
<dbReference type="GO" id="GO:0003723">
    <property type="term" value="F:RNA binding"/>
    <property type="evidence" value="ECO:0007669"/>
    <property type="project" value="UniProtKB-UniRule"/>
</dbReference>
<dbReference type="GO" id="GO:0006402">
    <property type="term" value="P:mRNA catabolic process"/>
    <property type="evidence" value="ECO:0007669"/>
    <property type="project" value="UniProtKB-UniRule"/>
</dbReference>
<dbReference type="GO" id="GO:0006396">
    <property type="term" value="P:RNA processing"/>
    <property type="evidence" value="ECO:0007669"/>
    <property type="project" value="InterPro"/>
</dbReference>
<dbReference type="CDD" id="cd02393">
    <property type="entry name" value="KH-I_PNPase"/>
    <property type="match status" value="1"/>
</dbReference>
<dbReference type="CDD" id="cd11363">
    <property type="entry name" value="RNase_PH_PNPase_1"/>
    <property type="match status" value="1"/>
</dbReference>
<dbReference type="CDD" id="cd11364">
    <property type="entry name" value="RNase_PH_PNPase_2"/>
    <property type="match status" value="1"/>
</dbReference>
<dbReference type="CDD" id="cd04472">
    <property type="entry name" value="S1_PNPase"/>
    <property type="match status" value="1"/>
</dbReference>
<dbReference type="FunFam" id="3.30.1370.10:FF:000001">
    <property type="entry name" value="Polyribonucleotide nucleotidyltransferase"/>
    <property type="match status" value="1"/>
</dbReference>
<dbReference type="FunFam" id="3.30.230.70:FF:000001">
    <property type="entry name" value="Polyribonucleotide nucleotidyltransferase"/>
    <property type="match status" value="1"/>
</dbReference>
<dbReference type="FunFam" id="3.30.230.70:FF:000002">
    <property type="entry name" value="Polyribonucleotide nucleotidyltransferase"/>
    <property type="match status" value="1"/>
</dbReference>
<dbReference type="FunFam" id="2.40.50.140:FF:000189">
    <property type="entry name" value="Polyribonucleotide nucleotidyltransferase, putative"/>
    <property type="match status" value="1"/>
</dbReference>
<dbReference type="Gene3D" id="3.30.230.70">
    <property type="entry name" value="GHMP Kinase, N-terminal domain"/>
    <property type="match status" value="2"/>
</dbReference>
<dbReference type="Gene3D" id="3.30.1370.10">
    <property type="entry name" value="K Homology domain, type 1"/>
    <property type="match status" value="1"/>
</dbReference>
<dbReference type="Gene3D" id="2.40.50.140">
    <property type="entry name" value="Nucleic acid-binding proteins"/>
    <property type="match status" value="1"/>
</dbReference>
<dbReference type="HAMAP" id="MF_01595">
    <property type="entry name" value="PNPase"/>
    <property type="match status" value="1"/>
</dbReference>
<dbReference type="InterPro" id="IPR001247">
    <property type="entry name" value="ExoRNase_PH_dom1"/>
</dbReference>
<dbReference type="InterPro" id="IPR015847">
    <property type="entry name" value="ExoRNase_PH_dom2"/>
</dbReference>
<dbReference type="InterPro" id="IPR036345">
    <property type="entry name" value="ExoRNase_PH_dom2_sf"/>
</dbReference>
<dbReference type="InterPro" id="IPR004087">
    <property type="entry name" value="KH_dom"/>
</dbReference>
<dbReference type="InterPro" id="IPR004088">
    <property type="entry name" value="KH_dom_type_1"/>
</dbReference>
<dbReference type="InterPro" id="IPR036612">
    <property type="entry name" value="KH_dom_type_1_sf"/>
</dbReference>
<dbReference type="InterPro" id="IPR012340">
    <property type="entry name" value="NA-bd_OB-fold"/>
</dbReference>
<dbReference type="InterPro" id="IPR012162">
    <property type="entry name" value="PNPase"/>
</dbReference>
<dbReference type="InterPro" id="IPR027408">
    <property type="entry name" value="PNPase/RNase_PH_dom_sf"/>
</dbReference>
<dbReference type="InterPro" id="IPR015848">
    <property type="entry name" value="PNPase_PH_RNA-bd_bac/org-type"/>
</dbReference>
<dbReference type="InterPro" id="IPR020568">
    <property type="entry name" value="Ribosomal_Su5_D2-typ_SF"/>
</dbReference>
<dbReference type="InterPro" id="IPR003029">
    <property type="entry name" value="S1_domain"/>
</dbReference>
<dbReference type="NCBIfam" id="TIGR03591">
    <property type="entry name" value="polynuc_phos"/>
    <property type="match status" value="1"/>
</dbReference>
<dbReference type="NCBIfam" id="NF008805">
    <property type="entry name" value="PRK11824.1"/>
    <property type="match status" value="1"/>
</dbReference>
<dbReference type="PANTHER" id="PTHR11252">
    <property type="entry name" value="POLYRIBONUCLEOTIDE NUCLEOTIDYLTRANSFERASE"/>
    <property type="match status" value="1"/>
</dbReference>
<dbReference type="PANTHER" id="PTHR11252:SF0">
    <property type="entry name" value="POLYRIBONUCLEOTIDE NUCLEOTIDYLTRANSFERASE 1, MITOCHONDRIAL"/>
    <property type="match status" value="1"/>
</dbReference>
<dbReference type="Pfam" id="PF00013">
    <property type="entry name" value="KH_1"/>
    <property type="match status" value="1"/>
</dbReference>
<dbReference type="Pfam" id="PF03726">
    <property type="entry name" value="PNPase"/>
    <property type="match status" value="1"/>
</dbReference>
<dbReference type="Pfam" id="PF01138">
    <property type="entry name" value="RNase_PH"/>
    <property type="match status" value="2"/>
</dbReference>
<dbReference type="Pfam" id="PF03725">
    <property type="entry name" value="RNase_PH_C"/>
    <property type="match status" value="1"/>
</dbReference>
<dbReference type="Pfam" id="PF00575">
    <property type="entry name" value="S1"/>
    <property type="match status" value="1"/>
</dbReference>
<dbReference type="PIRSF" id="PIRSF005499">
    <property type="entry name" value="PNPase"/>
    <property type="match status" value="1"/>
</dbReference>
<dbReference type="SMART" id="SM00322">
    <property type="entry name" value="KH"/>
    <property type="match status" value="1"/>
</dbReference>
<dbReference type="SMART" id="SM00316">
    <property type="entry name" value="S1"/>
    <property type="match status" value="1"/>
</dbReference>
<dbReference type="SUPFAM" id="SSF54791">
    <property type="entry name" value="Eukaryotic type KH-domain (KH-domain type I)"/>
    <property type="match status" value="1"/>
</dbReference>
<dbReference type="SUPFAM" id="SSF50249">
    <property type="entry name" value="Nucleic acid-binding proteins"/>
    <property type="match status" value="1"/>
</dbReference>
<dbReference type="SUPFAM" id="SSF55666">
    <property type="entry name" value="Ribonuclease PH domain 2-like"/>
    <property type="match status" value="2"/>
</dbReference>
<dbReference type="SUPFAM" id="SSF54211">
    <property type="entry name" value="Ribosomal protein S5 domain 2-like"/>
    <property type="match status" value="2"/>
</dbReference>
<dbReference type="PROSITE" id="PS50084">
    <property type="entry name" value="KH_TYPE_1"/>
    <property type="match status" value="1"/>
</dbReference>
<dbReference type="PROSITE" id="PS50126">
    <property type="entry name" value="S1"/>
    <property type="match status" value="1"/>
</dbReference>
<keyword id="KW-0963">Cytoplasm</keyword>
<keyword id="KW-0460">Magnesium</keyword>
<keyword id="KW-0479">Metal-binding</keyword>
<keyword id="KW-0548">Nucleotidyltransferase</keyword>
<keyword id="KW-0694">RNA-binding</keyword>
<keyword id="KW-0808">Transferase</keyword>
<gene>
    <name evidence="1" type="primary">pnp</name>
    <name type="ordered locus">P9215_14051</name>
</gene>